<sequence length="199" mass="20830">MAKVLVLYYSAYGHIEKMAYAVAEGAESAGAEVSVKRVPELVSEEVAKASHYKIDQPAPVATVEELGDYDAIIFGAGTRYGTVASQLRNFIDQTGSLWAKGKLVGKVGSAFTSSATQHGGQESTILGLIPTMLHHGMVVVGLPYAFQGQMGIDEIKGGSPYGASTITGGDGSRQPSEIELDAARFQGAHVARIAAKLAD</sequence>
<reference key="1">
    <citation type="journal article" date="2009" name="Appl. Environ. Microbiol.">
        <title>Rhizobium sp. strain NGR234 possesses a remarkable number of secretion systems.</title>
        <authorList>
            <person name="Schmeisser C."/>
            <person name="Liesegang H."/>
            <person name="Krysciak D."/>
            <person name="Bakkou N."/>
            <person name="Le Quere A."/>
            <person name="Wollherr A."/>
            <person name="Heinemeyer I."/>
            <person name="Morgenstern B."/>
            <person name="Pommerening-Roeser A."/>
            <person name="Flores M."/>
            <person name="Palacios R."/>
            <person name="Brenner S."/>
            <person name="Gottschalk G."/>
            <person name="Schmitz R.A."/>
            <person name="Broughton W.J."/>
            <person name="Perret X."/>
            <person name="Strittmatter A.W."/>
            <person name="Streit W.R."/>
        </authorList>
    </citation>
    <scope>NUCLEOTIDE SEQUENCE [LARGE SCALE GENOMIC DNA]</scope>
    <source>
        <strain>NBRC 101917 / NGR234</strain>
    </source>
</reference>
<name>NQOR_SINFN</name>
<proteinExistence type="inferred from homology"/>
<accession>C3MCH2</accession>
<protein>
    <recommendedName>
        <fullName evidence="1">NAD(P)H dehydrogenase (quinone)</fullName>
        <ecNumber evidence="1">1.6.5.2</ecNumber>
    </recommendedName>
    <alternativeName>
        <fullName>Flavoprotein WrbA</fullName>
    </alternativeName>
    <alternativeName>
        <fullName evidence="1">NAD(P)H:quinone oxidoreductase</fullName>
        <shortName evidence="1">NQO</shortName>
    </alternativeName>
</protein>
<organism>
    <name type="scientific">Sinorhizobium fredii (strain NBRC 101917 / NGR234)</name>
    <dbReference type="NCBI Taxonomy" id="394"/>
    <lineage>
        <taxon>Bacteria</taxon>
        <taxon>Pseudomonadati</taxon>
        <taxon>Pseudomonadota</taxon>
        <taxon>Alphaproteobacteria</taxon>
        <taxon>Hyphomicrobiales</taxon>
        <taxon>Rhizobiaceae</taxon>
        <taxon>Sinorhizobium/Ensifer group</taxon>
        <taxon>Sinorhizobium</taxon>
    </lineage>
</organism>
<comment type="catalytic activity">
    <reaction evidence="1">
        <text>a quinone + NADH + H(+) = a quinol + NAD(+)</text>
        <dbReference type="Rhea" id="RHEA:46160"/>
        <dbReference type="ChEBI" id="CHEBI:15378"/>
        <dbReference type="ChEBI" id="CHEBI:24646"/>
        <dbReference type="ChEBI" id="CHEBI:57540"/>
        <dbReference type="ChEBI" id="CHEBI:57945"/>
        <dbReference type="ChEBI" id="CHEBI:132124"/>
        <dbReference type="EC" id="1.6.5.2"/>
    </reaction>
</comment>
<comment type="catalytic activity">
    <reaction evidence="1">
        <text>a quinone + NADPH + H(+) = a quinol + NADP(+)</text>
        <dbReference type="Rhea" id="RHEA:46164"/>
        <dbReference type="ChEBI" id="CHEBI:15378"/>
        <dbReference type="ChEBI" id="CHEBI:24646"/>
        <dbReference type="ChEBI" id="CHEBI:57783"/>
        <dbReference type="ChEBI" id="CHEBI:58349"/>
        <dbReference type="ChEBI" id="CHEBI:132124"/>
        <dbReference type="EC" id="1.6.5.2"/>
    </reaction>
</comment>
<comment type="cofactor">
    <cofactor evidence="1">
        <name>FMN</name>
        <dbReference type="ChEBI" id="CHEBI:58210"/>
    </cofactor>
    <text evidence="1">Binds 1 FMN per monomer.</text>
</comment>
<comment type="similarity">
    <text evidence="1">Belongs to the WrbA family.</text>
</comment>
<gene>
    <name type="ordered locus">NGR_c14790</name>
</gene>
<evidence type="ECO:0000255" key="1">
    <source>
        <dbReference type="HAMAP-Rule" id="MF_01017"/>
    </source>
</evidence>
<feature type="chain" id="PRO_1000149013" description="NAD(P)H dehydrogenase (quinone)">
    <location>
        <begin position="1"/>
        <end position="199"/>
    </location>
</feature>
<feature type="domain" description="Flavodoxin-like" evidence="1">
    <location>
        <begin position="4"/>
        <end position="190"/>
    </location>
</feature>
<feature type="binding site" evidence="1">
    <location>
        <begin position="10"/>
        <end position="15"/>
    </location>
    <ligand>
        <name>FMN</name>
        <dbReference type="ChEBI" id="CHEBI:58210"/>
    </ligand>
</feature>
<feature type="binding site" evidence="1">
    <location>
        <position position="12"/>
    </location>
    <ligand>
        <name>NAD(+)</name>
        <dbReference type="ChEBI" id="CHEBI:57540"/>
    </ligand>
</feature>
<feature type="binding site" evidence="1">
    <location>
        <begin position="78"/>
        <end position="80"/>
    </location>
    <ligand>
        <name>FMN</name>
        <dbReference type="ChEBI" id="CHEBI:58210"/>
    </ligand>
</feature>
<feature type="binding site" evidence="1">
    <location>
        <position position="98"/>
    </location>
    <ligand>
        <name>substrate</name>
    </ligand>
</feature>
<feature type="binding site" evidence="1">
    <location>
        <begin position="113"/>
        <end position="119"/>
    </location>
    <ligand>
        <name>FMN</name>
        <dbReference type="ChEBI" id="CHEBI:58210"/>
    </ligand>
</feature>
<feature type="binding site" evidence="1">
    <location>
        <position position="134"/>
    </location>
    <ligand>
        <name>FMN</name>
        <dbReference type="ChEBI" id="CHEBI:58210"/>
    </ligand>
</feature>
<keyword id="KW-0285">Flavoprotein</keyword>
<keyword id="KW-0288">FMN</keyword>
<keyword id="KW-0520">NAD</keyword>
<keyword id="KW-0521">NADP</keyword>
<keyword id="KW-0547">Nucleotide-binding</keyword>
<keyword id="KW-0560">Oxidoreductase</keyword>
<keyword id="KW-1185">Reference proteome</keyword>
<dbReference type="EC" id="1.6.5.2" evidence="1"/>
<dbReference type="EMBL" id="CP001389">
    <property type="protein sequence ID" value="ACP25251.1"/>
    <property type="molecule type" value="Genomic_DNA"/>
</dbReference>
<dbReference type="RefSeq" id="WP_012708024.1">
    <property type="nucleotide sequence ID" value="NC_012587.1"/>
</dbReference>
<dbReference type="RefSeq" id="YP_002826004.1">
    <property type="nucleotide sequence ID" value="NC_012587.1"/>
</dbReference>
<dbReference type="SMR" id="C3MCH2"/>
<dbReference type="STRING" id="394.NGR_c14790"/>
<dbReference type="KEGG" id="rhi:NGR_c14790"/>
<dbReference type="PATRIC" id="fig|394.7.peg.4293"/>
<dbReference type="eggNOG" id="COG0655">
    <property type="taxonomic scope" value="Bacteria"/>
</dbReference>
<dbReference type="HOGENOM" id="CLU_051402_0_2_5"/>
<dbReference type="OrthoDB" id="9801479at2"/>
<dbReference type="Proteomes" id="UP000001054">
    <property type="component" value="Chromosome"/>
</dbReference>
<dbReference type="GO" id="GO:0016020">
    <property type="term" value="C:membrane"/>
    <property type="evidence" value="ECO:0007669"/>
    <property type="project" value="TreeGrafter"/>
</dbReference>
<dbReference type="GO" id="GO:0050660">
    <property type="term" value="F:flavin adenine dinucleotide binding"/>
    <property type="evidence" value="ECO:0007669"/>
    <property type="project" value="UniProtKB-UniRule"/>
</dbReference>
<dbReference type="GO" id="GO:0010181">
    <property type="term" value="F:FMN binding"/>
    <property type="evidence" value="ECO:0007669"/>
    <property type="project" value="InterPro"/>
</dbReference>
<dbReference type="GO" id="GO:0051287">
    <property type="term" value="F:NAD binding"/>
    <property type="evidence" value="ECO:0007669"/>
    <property type="project" value="UniProtKB-UniRule"/>
</dbReference>
<dbReference type="GO" id="GO:0050136">
    <property type="term" value="F:NADH:ubiquinone reductase (non-electrogenic) activity"/>
    <property type="evidence" value="ECO:0007669"/>
    <property type="project" value="RHEA"/>
</dbReference>
<dbReference type="GO" id="GO:0050661">
    <property type="term" value="F:NADP binding"/>
    <property type="evidence" value="ECO:0007669"/>
    <property type="project" value="UniProtKB-UniRule"/>
</dbReference>
<dbReference type="GO" id="GO:0008753">
    <property type="term" value="F:NADPH dehydrogenase (quinone) activity"/>
    <property type="evidence" value="ECO:0007669"/>
    <property type="project" value="RHEA"/>
</dbReference>
<dbReference type="FunFam" id="3.40.50.360:FF:000001">
    <property type="entry name" value="NAD(P)H dehydrogenase (Quinone) FQR1-like"/>
    <property type="match status" value="1"/>
</dbReference>
<dbReference type="Gene3D" id="3.40.50.360">
    <property type="match status" value="1"/>
</dbReference>
<dbReference type="HAMAP" id="MF_01017">
    <property type="entry name" value="NQOR"/>
    <property type="match status" value="1"/>
</dbReference>
<dbReference type="InterPro" id="IPR008254">
    <property type="entry name" value="Flavodoxin/NO_synth"/>
</dbReference>
<dbReference type="InterPro" id="IPR029039">
    <property type="entry name" value="Flavoprotein-like_sf"/>
</dbReference>
<dbReference type="InterPro" id="IPR010089">
    <property type="entry name" value="Flavoprotein_WrbA-like"/>
</dbReference>
<dbReference type="InterPro" id="IPR005025">
    <property type="entry name" value="FMN_Rdtase-like_dom"/>
</dbReference>
<dbReference type="InterPro" id="IPR037513">
    <property type="entry name" value="NQO"/>
</dbReference>
<dbReference type="NCBIfam" id="TIGR01755">
    <property type="entry name" value="flav_wrbA"/>
    <property type="match status" value="1"/>
</dbReference>
<dbReference type="NCBIfam" id="NF002999">
    <property type="entry name" value="PRK03767.1"/>
    <property type="match status" value="1"/>
</dbReference>
<dbReference type="PANTHER" id="PTHR30546">
    <property type="entry name" value="FLAVODOXIN-RELATED PROTEIN WRBA-RELATED"/>
    <property type="match status" value="1"/>
</dbReference>
<dbReference type="PANTHER" id="PTHR30546:SF23">
    <property type="entry name" value="FLAVOPROTEIN-LIKE PROTEIN YCP4-RELATED"/>
    <property type="match status" value="1"/>
</dbReference>
<dbReference type="Pfam" id="PF03358">
    <property type="entry name" value="FMN_red"/>
    <property type="match status" value="1"/>
</dbReference>
<dbReference type="SUPFAM" id="SSF52218">
    <property type="entry name" value="Flavoproteins"/>
    <property type="match status" value="1"/>
</dbReference>
<dbReference type="PROSITE" id="PS50902">
    <property type="entry name" value="FLAVODOXIN_LIKE"/>
    <property type="match status" value="1"/>
</dbReference>